<name>RS2_METS5</name>
<accession>A4YIM7</accession>
<protein>
    <recommendedName>
        <fullName evidence="1">Small ribosomal subunit protein uS2</fullName>
    </recommendedName>
    <alternativeName>
        <fullName evidence="2">30S ribosomal protein S2</fullName>
    </alternativeName>
</protein>
<reference key="1">
    <citation type="journal article" date="2008" name="Appl. Environ. Microbiol.">
        <title>The genome sequence of the metal-mobilizing, extremely thermoacidophilic archaeon Metallosphaera sedula provides insights into bioleaching-associated metabolism.</title>
        <authorList>
            <person name="Auernik K.S."/>
            <person name="Maezato Y."/>
            <person name="Blum P.H."/>
            <person name="Kelly R.M."/>
        </authorList>
    </citation>
    <scope>NUCLEOTIDE SEQUENCE [LARGE SCALE GENOMIC DNA]</scope>
    <source>
        <strain>ATCC 51363 / DSM 5348 / JCM 9185 / NBRC 15509 / TH2</strain>
    </source>
</reference>
<evidence type="ECO:0000255" key="1">
    <source>
        <dbReference type="HAMAP-Rule" id="MF_00291"/>
    </source>
</evidence>
<evidence type="ECO:0000305" key="2"/>
<comment type="similarity">
    <text evidence="1">Belongs to the universal ribosomal protein uS2 family.</text>
</comment>
<sequence>MSENERGTQLTEEEKEELQRGEKGAIIELLVPLENYLSAGVHIGTHTCTRYMERFIYRVRPEGLYVLDVRKIDERLRVAAKFLSRFQPQSILAVASRPYAFTPVQKFAEVVGARAVVGRMVPGMLTNPYLEDFIEPEVLLVSDPRTDTQAIKEAADMGIPVVAFSDTDAKVDYVDLVIPSNNKGRKSLALLYWALARQILRERKEIAPDADIPVKVEEFEVKLSQ</sequence>
<organism>
    <name type="scientific">Metallosphaera sedula (strain ATCC 51363 / DSM 5348 / JCM 9185 / NBRC 15509 / TH2)</name>
    <dbReference type="NCBI Taxonomy" id="399549"/>
    <lineage>
        <taxon>Archaea</taxon>
        <taxon>Thermoproteota</taxon>
        <taxon>Thermoprotei</taxon>
        <taxon>Sulfolobales</taxon>
        <taxon>Sulfolobaceae</taxon>
        <taxon>Metallosphaera</taxon>
    </lineage>
</organism>
<dbReference type="EMBL" id="CP000682">
    <property type="protein sequence ID" value="ABP96279.1"/>
    <property type="molecule type" value="Genomic_DNA"/>
</dbReference>
<dbReference type="SMR" id="A4YIM7"/>
<dbReference type="STRING" id="399549.Msed_2140"/>
<dbReference type="KEGG" id="mse:Msed_2140"/>
<dbReference type="eggNOG" id="arCOG04245">
    <property type="taxonomic scope" value="Archaea"/>
</dbReference>
<dbReference type="HOGENOM" id="CLU_058171_3_0_2"/>
<dbReference type="Proteomes" id="UP000000242">
    <property type="component" value="Chromosome"/>
</dbReference>
<dbReference type="GO" id="GO:0015935">
    <property type="term" value="C:small ribosomal subunit"/>
    <property type="evidence" value="ECO:0007669"/>
    <property type="project" value="InterPro"/>
</dbReference>
<dbReference type="GO" id="GO:0003735">
    <property type="term" value="F:structural constituent of ribosome"/>
    <property type="evidence" value="ECO:0007669"/>
    <property type="project" value="InterPro"/>
</dbReference>
<dbReference type="GO" id="GO:0006412">
    <property type="term" value="P:translation"/>
    <property type="evidence" value="ECO:0007669"/>
    <property type="project" value="UniProtKB-UniRule"/>
</dbReference>
<dbReference type="CDD" id="cd01425">
    <property type="entry name" value="RPS2"/>
    <property type="match status" value="1"/>
</dbReference>
<dbReference type="FunFam" id="3.40.50.10490:FF:000030">
    <property type="entry name" value="30S ribosomal protein S2"/>
    <property type="match status" value="1"/>
</dbReference>
<dbReference type="Gene3D" id="3.40.50.10490">
    <property type="entry name" value="Glucose-6-phosphate isomerase like protein, domain 1"/>
    <property type="match status" value="1"/>
</dbReference>
<dbReference type="HAMAP" id="MF_00291_A">
    <property type="entry name" value="Ribosomal_uS2_A"/>
    <property type="match status" value="1"/>
</dbReference>
<dbReference type="InterPro" id="IPR001865">
    <property type="entry name" value="Ribosomal_uS2"/>
</dbReference>
<dbReference type="InterPro" id="IPR023454">
    <property type="entry name" value="Ribosomal_uS2_arc"/>
</dbReference>
<dbReference type="InterPro" id="IPR018130">
    <property type="entry name" value="Ribosomal_uS2_CS"/>
</dbReference>
<dbReference type="InterPro" id="IPR005707">
    <property type="entry name" value="Ribosomal_uS2_euk/arc"/>
</dbReference>
<dbReference type="InterPro" id="IPR023591">
    <property type="entry name" value="Ribosomal_uS2_flav_dom_sf"/>
</dbReference>
<dbReference type="NCBIfam" id="TIGR01012">
    <property type="entry name" value="uS2_euk_arch"/>
    <property type="match status" value="1"/>
</dbReference>
<dbReference type="PANTHER" id="PTHR11489">
    <property type="entry name" value="40S RIBOSOMAL PROTEIN SA"/>
    <property type="match status" value="1"/>
</dbReference>
<dbReference type="Pfam" id="PF00318">
    <property type="entry name" value="Ribosomal_S2"/>
    <property type="match status" value="2"/>
</dbReference>
<dbReference type="PRINTS" id="PR00395">
    <property type="entry name" value="RIBOSOMALS2"/>
</dbReference>
<dbReference type="SUPFAM" id="SSF52313">
    <property type="entry name" value="Ribosomal protein S2"/>
    <property type="match status" value="1"/>
</dbReference>
<dbReference type="PROSITE" id="PS00962">
    <property type="entry name" value="RIBOSOMAL_S2_1"/>
    <property type="match status" value="1"/>
</dbReference>
<dbReference type="PROSITE" id="PS00963">
    <property type="entry name" value="RIBOSOMAL_S2_2"/>
    <property type="match status" value="1"/>
</dbReference>
<proteinExistence type="inferred from homology"/>
<gene>
    <name evidence="1" type="primary">rps2</name>
    <name type="ordered locus">Msed_2140</name>
</gene>
<keyword id="KW-1185">Reference proteome</keyword>
<keyword id="KW-0687">Ribonucleoprotein</keyword>
<keyword id="KW-0689">Ribosomal protein</keyword>
<feature type="chain" id="PRO_1000071948" description="Small ribosomal subunit protein uS2">
    <location>
        <begin position="1"/>
        <end position="225"/>
    </location>
</feature>